<sequence>MAQMTMVQAINDALKTELKNDQDVLIFGEDVGVNGGVFRVTEGLQKEFGEDRVFDTPLAESGIGGLAMGLAVEGFRPVMEVQFLGFVFEVFDAIAGQIARTRFRSGGTKTAPVTIRSPFGGGVHTPELHADNLEGILAQSPGLKVVIPSGPYDAKGLLISSIRSNDPVVYLEHMKLYRSFREEVPEEEYTIDIGKANVKKEGNDISIITYGAMVQESMKAAEELEKDGYSVEVIDLRTVQPIDVDTIVASVEKTGRAVVVQEAQRQAGVGAAVVAELSERAILSLEAPIGRVAAADTIYPFTQAENVWLPNKNDIIEKAKETLEF</sequence>
<proteinExistence type="evidence at protein level"/>
<name>ODPB_STAAU</name>
<comment type="function">
    <text evidence="1">The pyruvate dehydrogenase complex catalyzes the overall conversion of pyruvate to acetyl-CoA and CO(2). It contains multiple copies of three enzymatic components: pyruvate dehydrogenase (E1), dihydrolipoamide acetyltransferase (E2) and lipoamide dehydrogenase (E3) (By similarity).</text>
</comment>
<comment type="catalytic activity">
    <reaction>
        <text>N(6)-[(R)-lipoyl]-L-lysyl-[protein] + pyruvate + H(+) = N(6)-[(R)-S(8)-acetyldihydrolipoyl]-L-lysyl-[protein] + CO2</text>
        <dbReference type="Rhea" id="RHEA:19189"/>
        <dbReference type="Rhea" id="RHEA-COMP:10474"/>
        <dbReference type="Rhea" id="RHEA-COMP:10478"/>
        <dbReference type="ChEBI" id="CHEBI:15361"/>
        <dbReference type="ChEBI" id="CHEBI:15378"/>
        <dbReference type="ChEBI" id="CHEBI:16526"/>
        <dbReference type="ChEBI" id="CHEBI:83099"/>
        <dbReference type="ChEBI" id="CHEBI:83111"/>
        <dbReference type="EC" id="1.2.4.1"/>
    </reaction>
</comment>
<comment type="cofactor">
    <cofactor evidence="1">
        <name>thiamine diphosphate</name>
        <dbReference type="ChEBI" id="CHEBI:58937"/>
    </cofactor>
</comment>
<comment type="subunit">
    <text>Heterodimer of an alpha and a beta chain.</text>
</comment>
<comment type="mass spectrometry"/>
<dbReference type="EC" id="1.2.4.1"/>
<dbReference type="EMBL" id="AF235026">
    <property type="protein sequence ID" value="AAF36410.1"/>
    <property type="molecule type" value="Genomic_DNA"/>
</dbReference>
<dbReference type="RefSeq" id="WP_000068176.1">
    <property type="nucleotide sequence ID" value="NZ_WYDB01000003.1"/>
</dbReference>
<dbReference type="SMR" id="P0A0A3"/>
<dbReference type="OMA" id="WYANCPG"/>
<dbReference type="GO" id="GO:0004739">
    <property type="term" value="F:pyruvate dehydrogenase (acetyl-transferring) activity"/>
    <property type="evidence" value="ECO:0007669"/>
    <property type="project" value="UniProtKB-EC"/>
</dbReference>
<dbReference type="CDD" id="cd07036">
    <property type="entry name" value="TPP_PYR_E1-PDHc-beta_like"/>
    <property type="match status" value="1"/>
</dbReference>
<dbReference type="FunFam" id="3.40.50.920:FF:000001">
    <property type="entry name" value="Pyruvate dehydrogenase E1 beta subunit"/>
    <property type="match status" value="1"/>
</dbReference>
<dbReference type="FunFam" id="3.40.50.970:FF:000001">
    <property type="entry name" value="Pyruvate dehydrogenase E1 beta subunit"/>
    <property type="match status" value="1"/>
</dbReference>
<dbReference type="Gene3D" id="3.40.50.920">
    <property type="match status" value="1"/>
</dbReference>
<dbReference type="Gene3D" id="3.40.50.970">
    <property type="match status" value="1"/>
</dbReference>
<dbReference type="InterPro" id="IPR029061">
    <property type="entry name" value="THDP-binding"/>
</dbReference>
<dbReference type="InterPro" id="IPR009014">
    <property type="entry name" value="Transketo_C/PFOR_II"/>
</dbReference>
<dbReference type="InterPro" id="IPR005475">
    <property type="entry name" value="Transketolase-like_Pyr-bd"/>
</dbReference>
<dbReference type="InterPro" id="IPR033248">
    <property type="entry name" value="Transketolase_C"/>
</dbReference>
<dbReference type="PANTHER" id="PTHR43257">
    <property type="entry name" value="PYRUVATE DEHYDROGENASE E1 COMPONENT BETA SUBUNIT"/>
    <property type="match status" value="1"/>
</dbReference>
<dbReference type="PANTHER" id="PTHR43257:SF2">
    <property type="entry name" value="PYRUVATE DEHYDROGENASE E1 COMPONENT SUBUNIT BETA"/>
    <property type="match status" value="1"/>
</dbReference>
<dbReference type="Pfam" id="PF02779">
    <property type="entry name" value="Transket_pyr"/>
    <property type="match status" value="1"/>
</dbReference>
<dbReference type="Pfam" id="PF02780">
    <property type="entry name" value="Transketolase_C"/>
    <property type="match status" value="1"/>
</dbReference>
<dbReference type="SMART" id="SM00861">
    <property type="entry name" value="Transket_pyr"/>
    <property type="match status" value="1"/>
</dbReference>
<dbReference type="SUPFAM" id="SSF52518">
    <property type="entry name" value="Thiamin diphosphate-binding fold (THDP-binding)"/>
    <property type="match status" value="1"/>
</dbReference>
<dbReference type="SUPFAM" id="SSF52922">
    <property type="entry name" value="TK C-terminal domain-like"/>
    <property type="match status" value="1"/>
</dbReference>
<organism>
    <name type="scientific">Staphylococcus aureus</name>
    <dbReference type="NCBI Taxonomy" id="1280"/>
    <lineage>
        <taxon>Bacteria</taxon>
        <taxon>Bacillati</taxon>
        <taxon>Bacillota</taxon>
        <taxon>Bacilli</taxon>
        <taxon>Bacillales</taxon>
        <taxon>Staphylococcaceae</taxon>
        <taxon>Staphylococcus</taxon>
    </lineage>
</organism>
<gene>
    <name type="primary">pdhB</name>
</gene>
<accession>P0A0A3</accession>
<accession>Q9L6H5</accession>
<feature type="chain" id="PRO_0000162234" description="Pyruvate dehydrogenase E1 component subunit beta">
    <location>
        <begin position="1"/>
        <end position="325"/>
    </location>
</feature>
<feature type="binding site" evidence="1">
    <location>
        <position position="60"/>
    </location>
    <ligand>
        <name>thiamine diphosphate</name>
        <dbReference type="ChEBI" id="CHEBI:58937"/>
    </ligand>
</feature>
<evidence type="ECO:0000250" key="1"/>
<evidence type="ECO:0000269" key="2">
    <source>
    </source>
</evidence>
<protein>
    <recommendedName>
        <fullName>Pyruvate dehydrogenase E1 component subunit beta</fullName>
        <ecNumber>1.2.4.1</ecNumber>
    </recommendedName>
</protein>
<keyword id="KW-0560">Oxidoreductase</keyword>
<keyword id="KW-0670">Pyruvate</keyword>
<keyword id="KW-0786">Thiamine pyrophosphate</keyword>
<reference key="1">
    <citation type="submission" date="2000-02" db="EMBL/GenBank/DDBJ databases">
        <title>Synthesis of pyruvate dehydrogenase is stimulated by osmotic stress in Staphylococcus aureus.</title>
        <authorList>
            <person name="Vilhelmsson O."/>
            <person name="Miller K.J."/>
        </authorList>
    </citation>
    <scope>NUCLEOTIDE SEQUENCE [GENOMIC DNA]</scope>
    <source>
        <strain>ATCC 12600 / DSM 20231 / IAM 12544 / NCDO 949 / NCTC 8532</strain>
    </source>
</reference>
<reference key="2">
    <citation type="journal article" date="2006" name="Infect. Immun.">
        <title>Identification of Staphylococcus aureus proteins recognized by the antibody-mediated immune response to a biofilm infection.</title>
        <authorList>
            <person name="Brady R.A."/>
            <person name="Leid J.G."/>
            <person name="Camper A.K."/>
            <person name="Costerton J.W."/>
            <person name="Shirtliff M.E."/>
        </authorList>
    </citation>
    <scope>MASS SPECTROMETRY</scope>
    <source>
        <strain>MRSA-M2</strain>
    </source>
</reference>